<gene>
    <name evidence="1" type="primary">rplD</name>
    <name type="ordered locus">Rleg2_1333</name>
</gene>
<organism>
    <name type="scientific">Rhizobium leguminosarum bv. trifolii (strain WSM2304)</name>
    <dbReference type="NCBI Taxonomy" id="395492"/>
    <lineage>
        <taxon>Bacteria</taxon>
        <taxon>Pseudomonadati</taxon>
        <taxon>Pseudomonadota</taxon>
        <taxon>Alphaproteobacteria</taxon>
        <taxon>Hyphomicrobiales</taxon>
        <taxon>Rhizobiaceae</taxon>
        <taxon>Rhizobium/Agrobacterium group</taxon>
        <taxon>Rhizobium</taxon>
    </lineage>
</organism>
<keyword id="KW-1185">Reference proteome</keyword>
<keyword id="KW-0687">Ribonucleoprotein</keyword>
<keyword id="KW-0689">Ribosomal protein</keyword>
<keyword id="KW-0694">RNA-binding</keyword>
<keyword id="KW-0699">rRNA-binding</keyword>
<protein>
    <recommendedName>
        <fullName evidence="1">Large ribosomal subunit protein uL4</fullName>
    </recommendedName>
    <alternativeName>
        <fullName evidence="3">50S ribosomal protein L4</fullName>
    </alternativeName>
</protein>
<proteinExistence type="inferred from homology"/>
<accession>B5ZYT6</accession>
<name>RL4_RHILW</name>
<feature type="chain" id="PRO_1000142175" description="Large ribosomal subunit protein uL4">
    <location>
        <begin position="1"/>
        <end position="206"/>
    </location>
</feature>
<feature type="region of interest" description="Disordered" evidence="2">
    <location>
        <begin position="63"/>
        <end position="97"/>
    </location>
</feature>
<feature type="compositionally biased region" description="Basic residues" evidence="2">
    <location>
        <begin position="64"/>
        <end position="77"/>
    </location>
</feature>
<reference key="1">
    <citation type="journal article" date="2010" name="Stand. Genomic Sci.">
        <title>Complete genome sequence of Rhizobium leguminosarum bv trifolii strain WSM2304, an effective microsymbiont of the South American clover Trifolium polymorphum.</title>
        <authorList>
            <person name="Reeve W."/>
            <person name="O'Hara G."/>
            <person name="Chain P."/>
            <person name="Ardley J."/>
            <person name="Brau L."/>
            <person name="Nandesena K."/>
            <person name="Tiwari R."/>
            <person name="Malfatti S."/>
            <person name="Kiss H."/>
            <person name="Lapidus A."/>
            <person name="Copeland A."/>
            <person name="Nolan M."/>
            <person name="Land M."/>
            <person name="Ivanova N."/>
            <person name="Mavromatis K."/>
            <person name="Markowitz V."/>
            <person name="Kyrpides N."/>
            <person name="Melino V."/>
            <person name="Denton M."/>
            <person name="Yates R."/>
            <person name="Howieson J."/>
        </authorList>
    </citation>
    <scope>NUCLEOTIDE SEQUENCE [LARGE SCALE GENOMIC DNA]</scope>
    <source>
        <strain>WSM2304</strain>
    </source>
</reference>
<dbReference type="EMBL" id="CP001191">
    <property type="protein sequence ID" value="ACI54627.1"/>
    <property type="molecule type" value="Genomic_DNA"/>
</dbReference>
<dbReference type="RefSeq" id="WP_003587197.1">
    <property type="nucleotide sequence ID" value="NC_011369.1"/>
</dbReference>
<dbReference type="SMR" id="B5ZYT6"/>
<dbReference type="STRING" id="395492.Rleg2_1333"/>
<dbReference type="KEGG" id="rlt:Rleg2_1333"/>
<dbReference type="eggNOG" id="COG0088">
    <property type="taxonomic scope" value="Bacteria"/>
</dbReference>
<dbReference type="HOGENOM" id="CLU_041575_5_2_5"/>
<dbReference type="Proteomes" id="UP000008330">
    <property type="component" value="Chromosome"/>
</dbReference>
<dbReference type="GO" id="GO:1990904">
    <property type="term" value="C:ribonucleoprotein complex"/>
    <property type="evidence" value="ECO:0007669"/>
    <property type="project" value="UniProtKB-KW"/>
</dbReference>
<dbReference type="GO" id="GO:0005840">
    <property type="term" value="C:ribosome"/>
    <property type="evidence" value="ECO:0007669"/>
    <property type="project" value="UniProtKB-KW"/>
</dbReference>
<dbReference type="GO" id="GO:0019843">
    <property type="term" value="F:rRNA binding"/>
    <property type="evidence" value="ECO:0007669"/>
    <property type="project" value="UniProtKB-UniRule"/>
</dbReference>
<dbReference type="GO" id="GO:0003735">
    <property type="term" value="F:structural constituent of ribosome"/>
    <property type="evidence" value="ECO:0007669"/>
    <property type="project" value="InterPro"/>
</dbReference>
<dbReference type="GO" id="GO:0006412">
    <property type="term" value="P:translation"/>
    <property type="evidence" value="ECO:0007669"/>
    <property type="project" value="UniProtKB-UniRule"/>
</dbReference>
<dbReference type="Gene3D" id="3.40.1370.10">
    <property type="match status" value="1"/>
</dbReference>
<dbReference type="HAMAP" id="MF_01328_B">
    <property type="entry name" value="Ribosomal_uL4_B"/>
    <property type="match status" value="1"/>
</dbReference>
<dbReference type="InterPro" id="IPR002136">
    <property type="entry name" value="Ribosomal_uL4"/>
</dbReference>
<dbReference type="InterPro" id="IPR013005">
    <property type="entry name" value="Ribosomal_uL4-like"/>
</dbReference>
<dbReference type="InterPro" id="IPR023574">
    <property type="entry name" value="Ribosomal_uL4_dom_sf"/>
</dbReference>
<dbReference type="NCBIfam" id="TIGR03953">
    <property type="entry name" value="rplD_bact"/>
    <property type="match status" value="1"/>
</dbReference>
<dbReference type="PANTHER" id="PTHR10746">
    <property type="entry name" value="50S RIBOSOMAL PROTEIN L4"/>
    <property type="match status" value="1"/>
</dbReference>
<dbReference type="PANTHER" id="PTHR10746:SF6">
    <property type="entry name" value="LARGE RIBOSOMAL SUBUNIT PROTEIN UL4M"/>
    <property type="match status" value="1"/>
</dbReference>
<dbReference type="Pfam" id="PF00573">
    <property type="entry name" value="Ribosomal_L4"/>
    <property type="match status" value="1"/>
</dbReference>
<dbReference type="SUPFAM" id="SSF52166">
    <property type="entry name" value="Ribosomal protein L4"/>
    <property type="match status" value="1"/>
</dbReference>
<evidence type="ECO:0000255" key="1">
    <source>
        <dbReference type="HAMAP-Rule" id="MF_01328"/>
    </source>
</evidence>
<evidence type="ECO:0000256" key="2">
    <source>
        <dbReference type="SAM" id="MobiDB-lite"/>
    </source>
</evidence>
<evidence type="ECO:0000305" key="3"/>
<sequence length="206" mass="22387">MEFNVKTLEGKDAGKVSLSDAIFGLEPREDILARVIRWQLAKKQQGTHKAKGRAEVSRTGAKMYKQKGTGRARHHSARAPQFRGGGKAHGPVVRSHEHDLPKKVRALGLRLALSAKIKADDVIVIDNLVAAEAKTKALASVFETLGLTNALFIGGAELDGNFKLAAQNIPNIDVLPIQGINVYDIVRRGKLVLSKAAVEALEERFK</sequence>
<comment type="function">
    <text evidence="1">One of the primary rRNA binding proteins, this protein initially binds near the 5'-end of the 23S rRNA. It is important during the early stages of 50S assembly. It makes multiple contacts with different domains of the 23S rRNA in the assembled 50S subunit and ribosome.</text>
</comment>
<comment type="function">
    <text evidence="1">Forms part of the polypeptide exit tunnel.</text>
</comment>
<comment type="subunit">
    <text evidence="1">Part of the 50S ribosomal subunit.</text>
</comment>
<comment type="similarity">
    <text evidence="1">Belongs to the universal ribosomal protein uL4 family.</text>
</comment>